<dbReference type="EC" id="6.1.1.11" evidence="1"/>
<dbReference type="EMBL" id="CP000472">
    <property type="protein sequence ID" value="ACJ29326.1"/>
    <property type="molecule type" value="Genomic_DNA"/>
</dbReference>
<dbReference type="RefSeq" id="WP_020912682.1">
    <property type="nucleotide sequence ID" value="NC_011566.1"/>
</dbReference>
<dbReference type="SMR" id="B8CP82"/>
<dbReference type="STRING" id="225849.swp_2587"/>
<dbReference type="KEGG" id="swp:swp_2587"/>
<dbReference type="eggNOG" id="COG0172">
    <property type="taxonomic scope" value="Bacteria"/>
</dbReference>
<dbReference type="HOGENOM" id="CLU_023797_1_1_6"/>
<dbReference type="OrthoDB" id="9804647at2"/>
<dbReference type="UniPathway" id="UPA00906">
    <property type="reaction ID" value="UER00895"/>
</dbReference>
<dbReference type="Proteomes" id="UP000000753">
    <property type="component" value="Chromosome"/>
</dbReference>
<dbReference type="GO" id="GO:0005737">
    <property type="term" value="C:cytoplasm"/>
    <property type="evidence" value="ECO:0007669"/>
    <property type="project" value="UniProtKB-SubCell"/>
</dbReference>
<dbReference type="GO" id="GO:0005524">
    <property type="term" value="F:ATP binding"/>
    <property type="evidence" value="ECO:0007669"/>
    <property type="project" value="UniProtKB-UniRule"/>
</dbReference>
<dbReference type="GO" id="GO:0004828">
    <property type="term" value="F:serine-tRNA ligase activity"/>
    <property type="evidence" value="ECO:0007669"/>
    <property type="project" value="UniProtKB-UniRule"/>
</dbReference>
<dbReference type="GO" id="GO:0016260">
    <property type="term" value="P:selenocysteine biosynthetic process"/>
    <property type="evidence" value="ECO:0007669"/>
    <property type="project" value="UniProtKB-UniRule"/>
</dbReference>
<dbReference type="GO" id="GO:0006434">
    <property type="term" value="P:seryl-tRNA aminoacylation"/>
    <property type="evidence" value="ECO:0007669"/>
    <property type="project" value="UniProtKB-UniRule"/>
</dbReference>
<dbReference type="CDD" id="cd00770">
    <property type="entry name" value="SerRS_core"/>
    <property type="match status" value="1"/>
</dbReference>
<dbReference type="Gene3D" id="3.30.930.10">
    <property type="entry name" value="Bira Bifunctional Protein, Domain 2"/>
    <property type="match status" value="1"/>
</dbReference>
<dbReference type="Gene3D" id="1.10.287.40">
    <property type="entry name" value="Serine-tRNA synthetase, tRNA binding domain"/>
    <property type="match status" value="1"/>
</dbReference>
<dbReference type="HAMAP" id="MF_00176">
    <property type="entry name" value="Ser_tRNA_synth_type1"/>
    <property type="match status" value="1"/>
</dbReference>
<dbReference type="InterPro" id="IPR002314">
    <property type="entry name" value="aa-tRNA-synt_IIb"/>
</dbReference>
<dbReference type="InterPro" id="IPR006195">
    <property type="entry name" value="aa-tRNA-synth_II"/>
</dbReference>
<dbReference type="InterPro" id="IPR045864">
    <property type="entry name" value="aa-tRNA-synth_II/BPL/LPL"/>
</dbReference>
<dbReference type="InterPro" id="IPR002317">
    <property type="entry name" value="Ser-tRNA-ligase_type_1"/>
</dbReference>
<dbReference type="InterPro" id="IPR015866">
    <property type="entry name" value="Ser-tRNA-synth_1_N"/>
</dbReference>
<dbReference type="InterPro" id="IPR042103">
    <property type="entry name" value="SerRS_1_N_sf"/>
</dbReference>
<dbReference type="InterPro" id="IPR033729">
    <property type="entry name" value="SerRS_core"/>
</dbReference>
<dbReference type="InterPro" id="IPR010978">
    <property type="entry name" value="tRNA-bd_arm"/>
</dbReference>
<dbReference type="NCBIfam" id="TIGR00414">
    <property type="entry name" value="serS"/>
    <property type="match status" value="1"/>
</dbReference>
<dbReference type="PANTHER" id="PTHR43697:SF1">
    <property type="entry name" value="SERINE--TRNA LIGASE"/>
    <property type="match status" value="1"/>
</dbReference>
<dbReference type="PANTHER" id="PTHR43697">
    <property type="entry name" value="SERYL-TRNA SYNTHETASE"/>
    <property type="match status" value="1"/>
</dbReference>
<dbReference type="Pfam" id="PF02403">
    <property type="entry name" value="Seryl_tRNA_N"/>
    <property type="match status" value="1"/>
</dbReference>
<dbReference type="Pfam" id="PF00587">
    <property type="entry name" value="tRNA-synt_2b"/>
    <property type="match status" value="1"/>
</dbReference>
<dbReference type="PIRSF" id="PIRSF001529">
    <property type="entry name" value="Ser-tRNA-synth_IIa"/>
    <property type="match status" value="1"/>
</dbReference>
<dbReference type="PRINTS" id="PR00981">
    <property type="entry name" value="TRNASYNTHSER"/>
</dbReference>
<dbReference type="SUPFAM" id="SSF55681">
    <property type="entry name" value="Class II aaRS and biotin synthetases"/>
    <property type="match status" value="1"/>
</dbReference>
<dbReference type="SUPFAM" id="SSF46589">
    <property type="entry name" value="tRNA-binding arm"/>
    <property type="match status" value="1"/>
</dbReference>
<dbReference type="PROSITE" id="PS50862">
    <property type="entry name" value="AA_TRNA_LIGASE_II"/>
    <property type="match status" value="1"/>
</dbReference>
<proteinExistence type="inferred from homology"/>
<name>SYS_SHEPW</name>
<protein>
    <recommendedName>
        <fullName evidence="1">Serine--tRNA ligase</fullName>
        <ecNumber evidence="1">6.1.1.11</ecNumber>
    </recommendedName>
    <alternativeName>
        <fullName evidence="1">Seryl-tRNA synthetase</fullName>
        <shortName evidence="1">SerRS</shortName>
    </alternativeName>
    <alternativeName>
        <fullName evidence="1">Seryl-tRNA(Ser/Sec) synthetase</fullName>
    </alternativeName>
</protein>
<reference key="1">
    <citation type="journal article" date="2008" name="PLoS ONE">
        <title>Environmental adaptation: genomic analysis of the piezotolerant and psychrotolerant deep-sea iron reducing bacterium Shewanella piezotolerans WP3.</title>
        <authorList>
            <person name="Wang F."/>
            <person name="Wang J."/>
            <person name="Jian H."/>
            <person name="Zhang B."/>
            <person name="Li S."/>
            <person name="Wang F."/>
            <person name="Zeng X."/>
            <person name="Gao L."/>
            <person name="Bartlett D.H."/>
            <person name="Yu J."/>
            <person name="Hu S."/>
            <person name="Xiao X."/>
        </authorList>
    </citation>
    <scope>NUCLEOTIDE SEQUENCE [LARGE SCALE GENOMIC DNA]</scope>
    <source>
        <strain>WP3 / JCM 13877</strain>
    </source>
</reference>
<evidence type="ECO:0000255" key="1">
    <source>
        <dbReference type="HAMAP-Rule" id="MF_00176"/>
    </source>
</evidence>
<feature type="chain" id="PRO_1000199503" description="Serine--tRNA ligase">
    <location>
        <begin position="1"/>
        <end position="428"/>
    </location>
</feature>
<feature type="binding site" evidence="1">
    <location>
        <begin position="235"/>
        <end position="237"/>
    </location>
    <ligand>
        <name>L-serine</name>
        <dbReference type="ChEBI" id="CHEBI:33384"/>
    </ligand>
</feature>
<feature type="binding site" evidence="1">
    <location>
        <begin position="266"/>
        <end position="268"/>
    </location>
    <ligand>
        <name>ATP</name>
        <dbReference type="ChEBI" id="CHEBI:30616"/>
    </ligand>
</feature>
<feature type="binding site" evidence="1">
    <location>
        <position position="289"/>
    </location>
    <ligand>
        <name>L-serine</name>
        <dbReference type="ChEBI" id="CHEBI:33384"/>
    </ligand>
</feature>
<feature type="binding site" evidence="1">
    <location>
        <begin position="353"/>
        <end position="356"/>
    </location>
    <ligand>
        <name>ATP</name>
        <dbReference type="ChEBI" id="CHEBI:30616"/>
    </ligand>
</feature>
<feature type="binding site" evidence="1">
    <location>
        <position position="389"/>
    </location>
    <ligand>
        <name>L-serine</name>
        <dbReference type="ChEBI" id="CHEBI:33384"/>
    </ligand>
</feature>
<gene>
    <name evidence="1" type="primary">serS</name>
    <name type="ordered locus">swp_2587</name>
</gene>
<sequence>MLDPKFLRNELEVTAERLATRGFILDVERLGKLEEKRKSLQVSTEELQASRNAISKSIGQAKAKGEDVAPIMAKVGTLGAELDAKKVELAALLDELNAIAMSVPNLPDESAPIGADESENVEIRRWGTPKEFNFEVKDHVELGETLGGLDFKNAVKLTGSRFIIMKGQIARMHRALAQFMLDLHTTEHGYTEAYVPLLVNEDSLLGTGQLPKFGEDLFHTKPATEEGQGLSLIPTAEVPLTNIARDSIIDEDDLPVMMTAHTPCFRSEAGSYGRDTRGLIRQHQFDKVELVQLVKPEDSMQALEELTGHAETVLQKLGLPYRTVVLCTGDMGFGAAKTFDIEVWLPAQDTFREISSCSNMQDFQSRRMQARFKAKSAKKPSLLHTLNGSGLAVGRTLVAVLENYQNEDGSITVPEVLRGYMGGLEKIG</sequence>
<organism>
    <name type="scientific">Shewanella piezotolerans (strain WP3 / JCM 13877)</name>
    <dbReference type="NCBI Taxonomy" id="225849"/>
    <lineage>
        <taxon>Bacteria</taxon>
        <taxon>Pseudomonadati</taxon>
        <taxon>Pseudomonadota</taxon>
        <taxon>Gammaproteobacteria</taxon>
        <taxon>Alteromonadales</taxon>
        <taxon>Shewanellaceae</taxon>
        <taxon>Shewanella</taxon>
    </lineage>
</organism>
<keyword id="KW-0030">Aminoacyl-tRNA synthetase</keyword>
<keyword id="KW-0067">ATP-binding</keyword>
<keyword id="KW-0963">Cytoplasm</keyword>
<keyword id="KW-0436">Ligase</keyword>
<keyword id="KW-0547">Nucleotide-binding</keyword>
<keyword id="KW-0648">Protein biosynthesis</keyword>
<comment type="function">
    <text evidence="1">Catalyzes the attachment of serine to tRNA(Ser). Is also able to aminoacylate tRNA(Sec) with serine, to form the misacylated tRNA L-seryl-tRNA(Sec), which will be further converted into selenocysteinyl-tRNA(Sec).</text>
</comment>
<comment type="catalytic activity">
    <reaction evidence="1">
        <text>tRNA(Ser) + L-serine + ATP = L-seryl-tRNA(Ser) + AMP + diphosphate + H(+)</text>
        <dbReference type="Rhea" id="RHEA:12292"/>
        <dbReference type="Rhea" id="RHEA-COMP:9669"/>
        <dbReference type="Rhea" id="RHEA-COMP:9703"/>
        <dbReference type="ChEBI" id="CHEBI:15378"/>
        <dbReference type="ChEBI" id="CHEBI:30616"/>
        <dbReference type="ChEBI" id="CHEBI:33019"/>
        <dbReference type="ChEBI" id="CHEBI:33384"/>
        <dbReference type="ChEBI" id="CHEBI:78442"/>
        <dbReference type="ChEBI" id="CHEBI:78533"/>
        <dbReference type="ChEBI" id="CHEBI:456215"/>
        <dbReference type="EC" id="6.1.1.11"/>
    </reaction>
</comment>
<comment type="catalytic activity">
    <reaction evidence="1">
        <text>tRNA(Sec) + L-serine + ATP = L-seryl-tRNA(Sec) + AMP + diphosphate + H(+)</text>
        <dbReference type="Rhea" id="RHEA:42580"/>
        <dbReference type="Rhea" id="RHEA-COMP:9742"/>
        <dbReference type="Rhea" id="RHEA-COMP:10128"/>
        <dbReference type="ChEBI" id="CHEBI:15378"/>
        <dbReference type="ChEBI" id="CHEBI:30616"/>
        <dbReference type="ChEBI" id="CHEBI:33019"/>
        <dbReference type="ChEBI" id="CHEBI:33384"/>
        <dbReference type="ChEBI" id="CHEBI:78442"/>
        <dbReference type="ChEBI" id="CHEBI:78533"/>
        <dbReference type="ChEBI" id="CHEBI:456215"/>
        <dbReference type="EC" id="6.1.1.11"/>
    </reaction>
</comment>
<comment type="pathway">
    <text evidence="1">Aminoacyl-tRNA biosynthesis; selenocysteinyl-tRNA(Sec) biosynthesis; L-seryl-tRNA(Sec) from L-serine and tRNA(Sec): step 1/1.</text>
</comment>
<comment type="subunit">
    <text evidence="1">Homodimer. The tRNA molecule binds across the dimer.</text>
</comment>
<comment type="subcellular location">
    <subcellularLocation>
        <location evidence="1">Cytoplasm</location>
    </subcellularLocation>
</comment>
<comment type="domain">
    <text evidence="1">Consists of two distinct domains, a catalytic core and a N-terminal extension that is involved in tRNA binding.</text>
</comment>
<comment type="similarity">
    <text evidence="1">Belongs to the class-II aminoacyl-tRNA synthetase family. Type-1 seryl-tRNA synthetase subfamily.</text>
</comment>
<accession>B8CP82</accession>